<reference key="1">
    <citation type="journal article" date="2001" name="Science">
        <title>Comparative genomics of Listeria species.</title>
        <authorList>
            <person name="Glaser P."/>
            <person name="Frangeul L."/>
            <person name="Buchrieser C."/>
            <person name="Rusniok C."/>
            <person name="Amend A."/>
            <person name="Baquero F."/>
            <person name="Berche P."/>
            <person name="Bloecker H."/>
            <person name="Brandt P."/>
            <person name="Chakraborty T."/>
            <person name="Charbit A."/>
            <person name="Chetouani F."/>
            <person name="Couve E."/>
            <person name="de Daruvar A."/>
            <person name="Dehoux P."/>
            <person name="Domann E."/>
            <person name="Dominguez-Bernal G."/>
            <person name="Duchaud E."/>
            <person name="Durant L."/>
            <person name="Dussurget O."/>
            <person name="Entian K.-D."/>
            <person name="Fsihi H."/>
            <person name="Garcia-del Portillo F."/>
            <person name="Garrido P."/>
            <person name="Gautier L."/>
            <person name="Goebel W."/>
            <person name="Gomez-Lopez N."/>
            <person name="Hain T."/>
            <person name="Hauf J."/>
            <person name="Jackson D."/>
            <person name="Jones L.-M."/>
            <person name="Kaerst U."/>
            <person name="Kreft J."/>
            <person name="Kuhn M."/>
            <person name="Kunst F."/>
            <person name="Kurapkat G."/>
            <person name="Madueno E."/>
            <person name="Maitournam A."/>
            <person name="Mata Vicente J."/>
            <person name="Ng E."/>
            <person name="Nedjari H."/>
            <person name="Nordsiek G."/>
            <person name="Novella S."/>
            <person name="de Pablos B."/>
            <person name="Perez-Diaz J.-C."/>
            <person name="Purcell R."/>
            <person name="Remmel B."/>
            <person name="Rose M."/>
            <person name="Schlueter T."/>
            <person name="Simoes N."/>
            <person name="Tierrez A."/>
            <person name="Vazquez-Boland J.-A."/>
            <person name="Voss H."/>
            <person name="Wehland J."/>
            <person name="Cossart P."/>
        </authorList>
    </citation>
    <scope>NUCLEOTIDE SEQUENCE [LARGE SCALE GENOMIC DNA]</scope>
    <source>
        <strain>ATCC BAA-679 / EGD-e</strain>
    </source>
</reference>
<feature type="chain" id="PRO_0000182114" description="UDP-N-acetylmuramate--L-alanine ligase">
    <location>
        <begin position="1"/>
        <end position="447"/>
    </location>
</feature>
<feature type="binding site" evidence="1">
    <location>
        <begin position="108"/>
        <end position="114"/>
    </location>
    <ligand>
        <name>ATP</name>
        <dbReference type="ChEBI" id="CHEBI:30616"/>
    </ligand>
</feature>
<evidence type="ECO:0000255" key="1">
    <source>
        <dbReference type="HAMAP-Rule" id="MF_00046"/>
    </source>
</evidence>
<protein>
    <recommendedName>
        <fullName evidence="1">UDP-N-acetylmuramate--L-alanine ligase</fullName>
        <ecNumber evidence="1">6.3.2.8</ecNumber>
    </recommendedName>
    <alternativeName>
        <fullName evidence="1">UDP-N-acetylmuramoyl-L-alanine synthetase</fullName>
    </alternativeName>
</protein>
<sequence length="447" mass="50074">MTIYHFVGIKGSGMSALAQILHDKGFQVQGSDVDKYFFTQKALEEKQIPIMTFSADNIQEGLTIIAGNAFPDTHEEIERALELGLSVIRYHKFLGQLIDGYTSIAITGSHGKTSTTGLLSHVVGAIRPTSYLIGDGTGSGTKDAEYFALEACEYQRHFLAYKPTYAIMTNIDWDHPDYFKSVDDVFNAFETLGKQVKKAVFALGDDAELRKLTLDIPIIYFGFGEENEFQAKNVIKETTGTKFDVYHREEFLSSFEIPAYGDHNVLNALSVIALCDYEGLPVEDVKNELKTFEGVKRRFSITEKGNQVLVDDYAHHPSEIRATVNAARQKYPDKKVVAVFQPHTFTRTRTFLQGFADSLNLADEVYLCDIFGSAREKTGNLTIADLAHKTKGNHIIKEEHTEELLKYPEAVILFMGAGDVQKFQAAYEKVLDHEFLTEADLKKSAIN</sequence>
<comment type="function">
    <text evidence="1">Cell wall formation.</text>
</comment>
<comment type="catalytic activity">
    <reaction evidence="1">
        <text>UDP-N-acetyl-alpha-D-muramate + L-alanine + ATP = UDP-N-acetyl-alpha-D-muramoyl-L-alanine + ADP + phosphate + H(+)</text>
        <dbReference type="Rhea" id="RHEA:23372"/>
        <dbReference type="ChEBI" id="CHEBI:15378"/>
        <dbReference type="ChEBI" id="CHEBI:30616"/>
        <dbReference type="ChEBI" id="CHEBI:43474"/>
        <dbReference type="ChEBI" id="CHEBI:57972"/>
        <dbReference type="ChEBI" id="CHEBI:70757"/>
        <dbReference type="ChEBI" id="CHEBI:83898"/>
        <dbReference type="ChEBI" id="CHEBI:456216"/>
        <dbReference type="EC" id="6.3.2.8"/>
    </reaction>
</comment>
<comment type="pathway">
    <text evidence="1">Cell wall biogenesis; peptidoglycan biosynthesis.</text>
</comment>
<comment type="subcellular location">
    <subcellularLocation>
        <location evidence="1">Cytoplasm</location>
    </subcellularLocation>
</comment>
<comment type="similarity">
    <text evidence="1">Belongs to the MurCDEF family.</text>
</comment>
<name>MURC_LISMO</name>
<gene>
    <name evidence="1" type="primary">murC</name>
    <name type="ordered locus">lmo1605</name>
</gene>
<proteinExistence type="inferred from homology"/>
<accession>Q8Y6S8</accession>
<organism>
    <name type="scientific">Listeria monocytogenes serovar 1/2a (strain ATCC BAA-679 / EGD-e)</name>
    <dbReference type="NCBI Taxonomy" id="169963"/>
    <lineage>
        <taxon>Bacteria</taxon>
        <taxon>Bacillati</taxon>
        <taxon>Bacillota</taxon>
        <taxon>Bacilli</taxon>
        <taxon>Bacillales</taxon>
        <taxon>Listeriaceae</taxon>
        <taxon>Listeria</taxon>
    </lineage>
</organism>
<dbReference type="EC" id="6.3.2.8" evidence="1"/>
<dbReference type="EMBL" id="AL591979">
    <property type="protein sequence ID" value="CAC99683.1"/>
    <property type="molecule type" value="Genomic_DNA"/>
</dbReference>
<dbReference type="PIR" id="AE1275">
    <property type="entry name" value="AE1275"/>
</dbReference>
<dbReference type="RefSeq" id="NP_465130.1">
    <property type="nucleotide sequence ID" value="NC_003210.1"/>
</dbReference>
<dbReference type="RefSeq" id="WP_010989758.1">
    <property type="nucleotide sequence ID" value="NZ_CP149495.1"/>
</dbReference>
<dbReference type="SMR" id="Q8Y6S8"/>
<dbReference type="STRING" id="169963.gene:17594262"/>
<dbReference type="PaxDb" id="169963-lmo1605"/>
<dbReference type="EnsemblBacteria" id="CAC99683">
    <property type="protein sequence ID" value="CAC99683"/>
    <property type="gene ID" value="CAC99683"/>
</dbReference>
<dbReference type="GeneID" id="985741"/>
<dbReference type="KEGG" id="lmo:lmo1605"/>
<dbReference type="PATRIC" id="fig|169963.11.peg.1648"/>
<dbReference type="eggNOG" id="COG0773">
    <property type="taxonomic scope" value="Bacteria"/>
</dbReference>
<dbReference type="HOGENOM" id="CLU_028104_1_0_9"/>
<dbReference type="OrthoDB" id="9804126at2"/>
<dbReference type="PhylomeDB" id="Q8Y6S8"/>
<dbReference type="BioCyc" id="LMON169963:LMO1605-MONOMER"/>
<dbReference type="UniPathway" id="UPA00219"/>
<dbReference type="Proteomes" id="UP000000817">
    <property type="component" value="Chromosome"/>
</dbReference>
<dbReference type="GO" id="GO:0005737">
    <property type="term" value="C:cytoplasm"/>
    <property type="evidence" value="ECO:0007669"/>
    <property type="project" value="UniProtKB-SubCell"/>
</dbReference>
<dbReference type="GO" id="GO:0005524">
    <property type="term" value="F:ATP binding"/>
    <property type="evidence" value="ECO:0007669"/>
    <property type="project" value="UniProtKB-UniRule"/>
</dbReference>
<dbReference type="GO" id="GO:0008763">
    <property type="term" value="F:UDP-N-acetylmuramate-L-alanine ligase activity"/>
    <property type="evidence" value="ECO:0007669"/>
    <property type="project" value="UniProtKB-UniRule"/>
</dbReference>
<dbReference type="GO" id="GO:0051301">
    <property type="term" value="P:cell division"/>
    <property type="evidence" value="ECO:0007669"/>
    <property type="project" value="UniProtKB-KW"/>
</dbReference>
<dbReference type="GO" id="GO:0071555">
    <property type="term" value="P:cell wall organization"/>
    <property type="evidence" value="ECO:0007669"/>
    <property type="project" value="UniProtKB-KW"/>
</dbReference>
<dbReference type="GO" id="GO:0009252">
    <property type="term" value="P:peptidoglycan biosynthetic process"/>
    <property type="evidence" value="ECO:0007669"/>
    <property type="project" value="UniProtKB-UniRule"/>
</dbReference>
<dbReference type="GO" id="GO:0008360">
    <property type="term" value="P:regulation of cell shape"/>
    <property type="evidence" value="ECO:0007669"/>
    <property type="project" value="UniProtKB-KW"/>
</dbReference>
<dbReference type="Gene3D" id="3.90.190.20">
    <property type="entry name" value="Mur ligase, C-terminal domain"/>
    <property type="match status" value="1"/>
</dbReference>
<dbReference type="Gene3D" id="3.40.1190.10">
    <property type="entry name" value="Mur-like, catalytic domain"/>
    <property type="match status" value="1"/>
</dbReference>
<dbReference type="Gene3D" id="3.40.50.720">
    <property type="entry name" value="NAD(P)-binding Rossmann-like Domain"/>
    <property type="match status" value="1"/>
</dbReference>
<dbReference type="HAMAP" id="MF_00046">
    <property type="entry name" value="MurC"/>
    <property type="match status" value="1"/>
</dbReference>
<dbReference type="InterPro" id="IPR036565">
    <property type="entry name" value="Mur-like_cat_sf"/>
</dbReference>
<dbReference type="InterPro" id="IPR004101">
    <property type="entry name" value="Mur_ligase_C"/>
</dbReference>
<dbReference type="InterPro" id="IPR036615">
    <property type="entry name" value="Mur_ligase_C_dom_sf"/>
</dbReference>
<dbReference type="InterPro" id="IPR013221">
    <property type="entry name" value="Mur_ligase_cen"/>
</dbReference>
<dbReference type="InterPro" id="IPR000713">
    <property type="entry name" value="Mur_ligase_N"/>
</dbReference>
<dbReference type="InterPro" id="IPR050061">
    <property type="entry name" value="MurCDEF_pg_biosynth"/>
</dbReference>
<dbReference type="InterPro" id="IPR005758">
    <property type="entry name" value="UDP-N-AcMur_Ala_ligase_MurC"/>
</dbReference>
<dbReference type="NCBIfam" id="TIGR01082">
    <property type="entry name" value="murC"/>
    <property type="match status" value="1"/>
</dbReference>
<dbReference type="PANTHER" id="PTHR43445:SF3">
    <property type="entry name" value="UDP-N-ACETYLMURAMATE--L-ALANINE LIGASE"/>
    <property type="match status" value="1"/>
</dbReference>
<dbReference type="PANTHER" id="PTHR43445">
    <property type="entry name" value="UDP-N-ACETYLMURAMATE--L-ALANINE LIGASE-RELATED"/>
    <property type="match status" value="1"/>
</dbReference>
<dbReference type="Pfam" id="PF01225">
    <property type="entry name" value="Mur_ligase"/>
    <property type="match status" value="1"/>
</dbReference>
<dbReference type="Pfam" id="PF02875">
    <property type="entry name" value="Mur_ligase_C"/>
    <property type="match status" value="1"/>
</dbReference>
<dbReference type="Pfam" id="PF08245">
    <property type="entry name" value="Mur_ligase_M"/>
    <property type="match status" value="1"/>
</dbReference>
<dbReference type="SUPFAM" id="SSF51984">
    <property type="entry name" value="MurCD N-terminal domain"/>
    <property type="match status" value="1"/>
</dbReference>
<dbReference type="SUPFAM" id="SSF53623">
    <property type="entry name" value="MurD-like peptide ligases, catalytic domain"/>
    <property type="match status" value="1"/>
</dbReference>
<dbReference type="SUPFAM" id="SSF53244">
    <property type="entry name" value="MurD-like peptide ligases, peptide-binding domain"/>
    <property type="match status" value="1"/>
</dbReference>
<keyword id="KW-0067">ATP-binding</keyword>
<keyword id="KW-0131">Cell cycle</keyword>
<keyword id="KW-0132">Cell division</keyword>
<keyword id="KW-0133">Cell shape</keyword>
<keyword id="KW-0961">Cell wall biogenesis/degradation</keyword>
<keyword id="KW-0963">Cytoplasm</keyword>
<keyword id="KW-0436">Ligase</keyword>
<keyword id="KW-0547">Nucleotide-binding</keyword>
<keyword id="KW-0573">Peptidoglycan synthesis</keyword>
<keyword id="KW-1185">Reference proteome</keyword>